<organism>
    <name type="scientific">Porphyromonas gingivalis (strain ATCC BAA-308 / W83)</name>
    <dbReference type="NCBI Taxonomy" id="242619"/>
    <lineage>
        <taxon>Bacteria</taxon>
        <taxon>Pseudomonadati</taxon>
        <taxon>Bacteroidota</taxon>
        <taxon>Bacteroidia</taxon>
        <taxon>Bacteroidales</taxon>
        <taxon>Porphyromonadaceae</taxon>
        <taxon>Porphyromonas</taxon>
    </lineage>
</organism>
<feature type="chain" id="PRO_0000181578" description="Large ribosomal subunit protein bL25">
    <location>
        <begin position="1"/>
        <end position="192"/>
    </location>
</feature>
<comment type="function">
    <text evidence="1">This is one of the proteins that binds to the 5S RNA in the ribosome where it forms part of the central protuberance.</text>
</comment>
<comment type="subunit">
    <text evidence="1">Part of the 50S ribosomal subunit; part of the 5S rRNA/L5/L18/L25 subcomplex. Contacts the 5S rRNA. Binds to the 5S rRNA independently of L5 and L18.</text>
</comment>
<comment type="similarity">
    <text evidence="1">Belongs to the bacterial ribosomal protein bL25 family. CTC subfamily.</text>
</comment>
<proteinExistence type="inferred from homology"/>
<gene>
    <name evidence="1" type="primary">rplY</name>
    <name evidence="1" type="synonym">ctc</name>
    <name type="ordered locus">PG_0167</name>
</gene>
<accession>Q7MXK8</accession>
<evidence type="ECO:0000255" key="1">
    <source>
        <dbReference type="HAMAP-Rule" id="MF_01334"/>
    </source>
</evidence>
<evidence type="ECO:0000305" key="2"/>
<dbReference type="EMBL" id="AE015924">
    <property type="protein sequence ID" value="AAQ65407.1"/>
    <property type="molecule type" value="Genomic_DNA"/>
</dbReference>
<dbReference type="RefSeq" id="WP_005875353.1">
    <property type="nucleotide sequence ID" value="NC_002950.2"/>
</dbReference>
<dbReference type="SMR" id="Q7MXK8"/>
<dbReference type="STRING" id="242619.PG_0167"/>
<dbReference type="EnsemblBacteria" id="AAQ65407">
    <property type="protein sequence ID" value="AAQ65407"/>
    <property type="gene ID" value="PG_0167"/>
</dbReference>
<dbReference type="GeneID" id="29255527"/>
<dbReference type="KEGG" id="pgi:PG_0167"/>
<dbReference type="eggNOG" id="COG1825">
    <property type="taxonomic scope" value="Bacteria"/>
</dbReference>
<dbReference type="HOGENOM" id="CLU_075939_2_1_10"/>
<dbReference type="Proteomes" id="UP000000588">
    <property type="component" value="Chromosome"/>
</dbReference>
<dbReference type="GO" id="GO:0022625">
    <property type="term" value="C:cytosolic large ribosomal subunit"/>
    <property type="evidence" value="ECO:0007669"/>
    <property type="project" value="TreeGrafter"/>
</dbReference>
<dbReference type="GO" id="GO:0008097">
    <property type="term" value="F:5S rRNA binding"/>
    <property type="evidence" value="ECO:0007669"/>
    <property type="project" value="InterPro"/>
</dbReference>
<dbReference type="GO" id="GO:0003735">
    <property type="term" value="F:structural constituent of ribosome"/>
    <property type="evidence" value="ECO:0007669"/>
    <property type="project" value="InterPro"/>
</dbReference>
<dbReference type="GO" id="GO:0006412">
    <property type="term" value="P:translation"/>
    <property type="evidence" value="ECO:0007669"/>
    <property type="project" value="UniProtKB-UniRule"/>
</dbReference>
<dbReference type="CDD" id="cd00495">
    <property type="entry name" value="Ribosomal_L25_TL5_CTC"/>
    <property type="match status" value="1"/>
</dbReference>
<dbReference type="Gene3D" id="2.170.120.20">
    <property type="entry name" value="Ribosomal protein L25, beta domain"/>
    <property type="match status" value="1"/>
</dbReference>
<dbReference type="Gene3D" id="2.40.240.10">
    <property type="entry name" value="Ribosomal Protein L25, Chain P"/>
    <property type="match status" value="1"/>
</dbReference>
<dbReference type="HAMAP" id="MF_01334">
    <property type="entry name" value="Ribosomal_bL25_CTC"/>
    <property type="match status" value="1"/>
</dbReference>
<dbReference type="InterPro" id="IPR020056">
    <property type="entry name" value="Rbsml_bL25/Gln-tRNA_synth_N"/>
</dbReference>
<dbReference type="InterPro" id="IPR011035">
    <property type="entry name" value="Ribosomal_bL25/Gln-tRNA_synth"/>
</dbReference>
<dbReference type="InterPro" id="IPR020057">
    <property type="entry name" value="Ribosomal_bL25_b-dom"/>
</dbReference>
<dbReference type="InterPro" id="IPR037121">
    <property type="entry name" value="Ribosomal_bL25_C"/>
</dbReference>
<dbReference type="InterPro" id="IPR001021">
    <property type="entry name" value="Ribosomal_bL25_long"/>
</dbReference>
<dbReference type="InterPro" id="IPR029751">
    <property type="entry name" value="Ribosomal_L25_dom"/>
</dbReference>
<dbReference type="InterPro" id="IPR020930">
    <property type="entry name" value="Ribosomal_uL5_bac-type"/>
</dbReference>
<dbReference type="NCBIfam" id="TIGR00731">
    <property type="entry name" value="bL25_bact_ctc"/>
    <property type="match status" value="1"/>
</dbReference>
<dbReference type="NCBIfam" id="NF004132">
    <property type="entry name" value="PRK05618.2-2"/>
    <property type="match status" value="1"/>
</dbReference>
<dbReference type="PANTHER" id="PTHR33284">
    <property type="entry name" value="RIBOSOMAL PROTEIN L25/GLN-TRNA SYNTHETASE, ANTI-CODON-BINDING DOMAIN-CONTAINING PROTEIN"/>
    <property type="match status" value="1"/>
</dbReference>
<dbReference type="PANTHER" id="PTHR33284:SF1">
    <property type="entry name" value="RIBOSOMAL PROTEIN L25_GLN-TRNA SYNTHETASE, ANTI-CODON-BINDING DOMAIN-CONTAINING PROTEIN"/>
    <property type="match status" value="1"/>
</dbReference>
<dbReference type="Pfam" id="PF01386">
    <property type="entry name" value="Ribosomal_L25p"/>
    <property type="match status" value="1"/>
</dbReference>
<dbReference type="Pfam" id="PF14693">
    <property type="entry name" value="Ribosomal_TL5_C"/>
    <property type="match status" value="1"/>
</dbReference>
<dbReference type="SUPFAM" id="SSF50715">
    <property type="entry name" value="Ribosomal protein L25-like"/>
    <property type="match status" value="1"/>
</dbReference>
<name>RL25_PORGI</name>
<protein>
    <recommendedName>
        <fullName evidence="1">Large ribosomal subunit protein bL25</fullName>
    </recommendedName>
    <alternativeName>
        <fullName evidence="2">50S ribosomal protein L25</fullName>
    </alternativeName>
    <alternativeName>
        <fullName evidence="1">General stress protein CTC</fullName>
    </alternativeName>
</protein>
<reference key="1">
    <citation type="journal article" date="2003" name="J. Bacteriol.">
        <title>Complete genome sequence of the oral pathogenic bacterium Porphyromonas gingivalis strain W83.</title>
        <authorList>
            <person name="Nelson K.E."/>
            <person name="Fleischmann R.D."/>
            <person name="DeBoy R.T."/>
            <person name="Paulsen I.T."/>
            <person name="Fouts D.E."/>
            <person name="Eisen J.A."/>
            <person name="Daugherty S.C."/>
            <person name="Dodson R.J."/>
            <person name="Durkin A.S."/>
            <person name="Gwinn M.L."/>
            <person name="Haft D.H."/>
            <person name="Kolonay J.F."/>
            <person name="Nelson W.C."/>
            <person name="Mason T.M."/>
            <person name="Tallon L."/>
            <person name="Gray J."/>
            <person name="Granger D."/>
            <person name="Tettelin H."/>
            <person name="Dong H."/>
            <person name="Galvin J.L."/>
            <person name="Duncan M.J."/>
            <person name="Dewhirst F.E."/>
            <person name="Fraser C.M."/>
        </authorList>
    </citation>
    <scope>NUCLEOTIDE SEQUENCE [LARGE SCALE GENOMIC DNA]</scope>
    <source>
        <strain>ATCC BAA-308 / W83</strain>
    </source>
</reference>
<sequence length="192" mass="20998">MKTFQLTGTPRAEFGKKAAKAIRKEDQIPAVLYGGKGEGVNFIVSQDAVRNLIYSPEIFLVELTVEGSGSYKAILKEIQFHPVTDRIIHIDFLQVTDEKPVVMEVPVVLTGHAEGVKAGGKLSLEMRKLKVKALYSEIPEKLDIDVSDLQLGKTIQVGELHFEGLTLMNAKNAVVCAVKLTRAARGAAVKKQ</sequence>
<keyword id="KW-1185">Reference proteome</keyword>
<keyword id="KW-0687">Ribonucleoprotein</keyword>
<keyword id="KW-0689">Ribosomal protein</keyword>
<keyword id="KW-0694">RNA-binding</keyword>
<keyword id="KW-0699">rRNA-binding</keyword>